<protein>
    <recommendedName>
        <fullName evidence="1">Peptide methionine sulfoxide reductase MsrB</fullName>
        <ecNumber evidence="1">1.8.4.12</ecNumber>
    </recommendedName>
    <alternativeName>
        <fullName evidence="1">Peptide-methionine (R)-S-oxide reductase</fullName>
    </alternativeName>
</protein>
<organism>
    <name type="scientific">Escherichia coli O7:K1 (strain IAI39 / ExPEC)</name>
    <dbReference type="NCBI Taxonomy" id="585057"/>
    <lineage>
        <taxon>Bacteria</taxon>
        <taxon>Pseudomonadati</taxon>
        <taxon>Pseudomonadota</taxon>
        <taxon>Gammaproteobacteria</taxon>
        <taxon>Enterobacterales</taxon>
        <taxon>Enterobacteriaceae</taxon>
        <taxon>Escherichia</taxon>
    </lineage>
</organism>
<reference key="1">
    <citation type="journal article" date="2009" name="PLoS Genet.">
        <title>Organised genome dynamics in the Escherichia coli species results in highly diverse adaptive paths.</title>
        <authorList>
            <person name="Touchon M."/>
            <person name="Hoede C."/>
            <person name="Tenaillon O."/>
            <person name="Barbe V."/>
            <person name="Baeriswyl S."/>
            <person name="Bidet P."/>
            <person name="Bingen E."/>
            <person name="Bonacorsi S."/>
            <person name="Bouchier C."/>
            <person name="Bouvet O."/>
            <person name="Calteau A."/>
            <person name="Chiapello H."/>
            <person name="Clermont O."/>
            <person name="Cruveiller S."/>
            <person name="Danchin A."/>
            <person name="Diard M."/>
            <person name="Dossat C."/>
            <person name="Karoui M.E."/>
            <person name="Frapy E."/>
            <person name="Garry L."/>
            <person name="Ghigo J.M."/>
            <person name="Gilles A.M."/>
            <person name="Johnson J."/>
            <person name="Le Bouguenec C."/>
            <person name="Lescat M."/>
            <person name="Mangenot S."/>
            <person name="Martinez-Jehanne V."/>
            <person name="Matic I."/>
            <person name="Nassif X."/>
            <person name="Oztas S."/>
            <person name="Petit M.A."/>
            <person name="Pichon C."/>
            <person name="Rouy Z."/>
            <person name="Ruf C.S."/>
            <person name="Schneider D."/>
            <person name="Tourret J."/>
            <person name="Vacherie B."/>
            <person name="Vallenet D."/>
            <person name="Medigue C."/>
            <person name="Rocha E.P.C."/>
            <person name="Denamur E."/>
        </authorList>
    </citation>
    <scope>NUCLEOTIDE SEQUENCE [LARGE SCALE GENOMIC DNA]</scope>
    <source>
        <strain>IAI39 / ExPEC</strain>
    </source>
</reference>
<comment type="catalytic activity">
    <reaction evidence="1">
        <text>L-methionyl-[protein] + [thioredoxin]-disulfide + H2O = L-methionyl-(R)-S-oxide-[protein] + [thioredoxin]-dithiol</text>
        <dbReference type="Rhea" id="RHEA:24164"/>
        <dbReference type="Rhea" id="RHEA-COMP:10698"/>
        <dbReference type="Rhea" id="RHEA-COMP:10700"/>
        <dbReference type="Rhea" id="RHEA-COMP:12313"/>
        <dbReference type="Rhea" id="RHEA-COMP:12314"/>
        <dbReference type="ChEBI" id="CHEBI:15377"/>
        <dbReference type="ChEBI" id="CHEBI:16044"/>
        <dbReference type="ChEBI" id="CHEBI:29950"/>
        <dbReference type="ChEBI" id="CHEBI:45764"/>
        <dbReference type="ChEBI" id="CHEBI:50058"/>
        <dbReference type="EC" id="1.8.4.12"/>
    </reaction>
</comment>
<comment type="cofactor">
    <cofactor evidence="1">
        <name>Zn(2+)</name>
        <dbReference type="ChEBI" id="CHEBI:29105"/>
    </cofactor>
    <text evidence="1">Binds 1 zinc ion per subunit. The zinc ion is important for the structural integrity of the protein.</text>
</comment>
<comment type="similarity">
    <text evidence="1">Belongs to the MsrB Met sulfoxide reductase family.</text>
</comment>
<evidence type="ECO:0000255" key="1">
    <source>
        <dbReference type="HAMAP-Rule" id="MF_01400"/>
    </source>
</evidence>
<evidence type="ECO:0000255" key="2">
    <source>
        <dbReference type="PROSITE-ProRule" id="PRU01126"/>
    </source>
</evidence>
<name>MSRB_ECO7I</name>
<proteinExistence type="inferred from homology"/>
<accession>B7NSZ8</accession>
<dbReference type="EC" id="1.8.4.12" evidence="1"/>
<dbReference type="EMBL" id="CU928164">
    <property type="protein sequence ID" value="CAR17409.1"/>
    <property type="molecule type" value="Genomic_DNA"/>
</dbReference>
<dbReference type="RefSeq" id="WP_001284618.1">
    <property type="nucleotide sequence ID" value="NC_011750.1"/>
</dbReference>
<dbReference type="RefSeq" id="YP_002407283.1">
    <property type="nucleotide sequence ID" value="NC_011750.1"/>
</dbReference>
<dbReference type="SMR" id="B7NSZ8"/>
<dbReference type="STRING" id="585057.ECIAI39_1275"/>
<dbReference type="GeneID" id="93775987"/>
<dbReference type="KEGG" id="ect:ECIAI39_1275"/>
<dbReference type="PATRIC" id="fig|585057.6.peg.1334"/>
<dbReference type="HOGENOM" id="CLU_031040_8_5_6"/>
<dbReference type="Proteomes" id="UP000000749">
    <property type="component" value="Chromosome"/>
</dbReference>
<dbReference type="GO" id="GO:0005737">
    <property type="term" value="C:cytoplasm"/>
    <property type="evidence" value="ECO:0007669"/>
    <property type="project" value="TreeGrafter"/>
</dbReference>
<dbReference type="GO" id="GO:0033743">
    <property type="term" value="F:peptide-methionine (R)-S-oxide reductase activity"/>
    <property type="evidence" value="ECO:0007669"/>
    <property type="project" value="UniProtKB-UniRule"/>
</dbReference>
<dbReference type="GO" id="GO:0008270">
    <property type="term" value="F:zinc ion binding"/>
    <property type="evidence" value="ECO:0007669"/>
    <property type="project" value="UniProtKB-UniRule"/>
</dbReference>
<dbReference type="GO" id="GO:0030091">
    <property type="term" value="P:protein repair"/>
    <property type="evidence" value="ECO:0007669"/>
    <property type="project" value="InterPro"/>
</dbReference>
<dbReference type="GO" id="GO:0006979">
    <property type="term" value="P:response to oxidative stress"/>
    <property type="evidence" value="ECO:0007669"/>
    <property type="project" value="InterPro"/>
</dbReference>
<dbReference type="FunFam" id="2.170.150.20:FF:000001">
    <property type="entry name" value="Peptide methionine sulfoxide reductase MsrB"/>
    <property type="match status" value="1"/>
</dbReference>
<dbReference type="Gene3D" id="2.170.150.20">
    <property type="entry name" value="Peptide methionine sulfoxide reductase"/>
    <property type="match status" value="1"/>
</dbReference>
<dbReference type="HAMAP" id="MF_01400">
    <property type="entry name" value="MsrB"/>
    <property type="match status" value="1"/>
</dbReference>
<dbReference type="InterPro" id="IPR028427">
    <property type="entry name" value="Met_Sox_Rdtase_MsrB"/>
</dbReference>
<dbReference type="InterPro" id="IPR002579">
    <property type="entry name" value="Met_Sox_Rdtase_MsrB_dom"/>
</dbReference>
<dbReference type="InterPro" id="IPR011057">
    <property type="entry name" value="Mss4-like_sf"/>
</dbReference>
<dbReference type="NCBIfam" id="TIGR00357">
    <property type="entry name" value="peptide-methionine (R)-S-oxide reductase MsrB"/>
    <property type="match status" value="1"/>
</dbReference>
<dbReference type="PANTHER" id="PTHR10173">
    <property type="entry name" value="METHIONINE SULFOXIDE REDUCTASE"/>
    <property type="match status" value="1"/>
</dbReference>
<dbReference type="PANTHER" id="PTHR10173:SF52">
    <property type="entry name" value="METHIONINE-R-SULFOXIDE REDUCTASE B1"/>
    <property type="match status" value="1"/>
</dbReference>
<dbReference type="Pfam" id="PF01641">
    <property type="entry name" value="SelR"/>
    <property type="match status" value="1"/>
</dbReference>
<dbReference type="SUPFAM" id="SSF51316">
    <property type="entry name" value="Mss4-like"/>
    <property type="match status" value="1"/>
</dbReference>
<dbReference type="PROSITE" id="PS51790">
    <property type="entry name" value="MSRB"/>
    <property type="match status" value="1"/>
</dbReference>
<keyword id="KW-0479">Metal-binding</keyword>
<keyword id="KW-0560">Oxidoreductase</keyword>
<keyword id="KW-0862">Zinc</keyword>
<sequence>MANKPSAEELKKNLSEMQFYVTQNHGTEPPFTGRLLHNKRDGVYHCLICDAPLFHSQTKYDSGCGWPSFYEPVSEESIRYIKDLSHGMQRIEIRCGNCDAHLGHVFPDGPQPTGERYCVNSASLRFTDGENGEEING</sequence>
<feature type="chain" id="PRO_1000145366" description="Peptide methionine sulfoxide reductase MsrB">
    <location>
        <begin position="1"/>
        <end position="137"/>
    </location>
</feature>
<feature type="domain" description="MsrB" evidence="2">
    <location>
        <begin position="7"/>
        <end position="129"/>
    </location>
</feature>
<feature type="active site" description="Nucleophile" evidence="2">
    <location>
        <position position="118"/>
    </location>
</feature>
<feature type="binding site" evidence="2">
    <location>
        <position position="46"/>
    </location>
    <ligand>
        <name>Zn(2+)</name>
        <dbReference type="ChEBI" id="CHEBI:29105"/>
    </ligand>
</feature>
<feature type="binding site" evidence="2">
    <location>
        <position position="49"/>
    </location>
    <ligand>
        <name>Zn(2+)</name>
        <dbReference type="ChEBI" id="CHEBI:29105"/>
    </ligand>
</feature>
<feature type="binding site" evidence="2">
    <location>
        <position position="95"/>
    </location>
    <ligand>
        <name>Zn(2+)</name>
        <dbReference type="ChEBI" id="CHEBI:29105"/>
    </ligand>
</feature>
<feature type="binding site" evidence="2">
    <location>
        <position position="98"/>
    </location>
    <ligand>
        <name>Zn(2+)</name>
        <dbReference type="ChEBI" id="CHEBI:29105"/>
    </ligand>
</feature>
<gene>
    <name evidence="1" type="primary">msrB</name>
    <name type="ordered locus">ECIAI39_1275</name>
</gene>